<dbReference type="EC" id="3.1.3.-"/>
<dbReference type="EMBL" id="U00089">
    <property type="protein sequence ID" value="AAB96217.1"/>
    <property type="molecule type" value="Genomic_DNA"/>
</dbReference>
<dbReference type="PIR" id="S73895">
    <property type="entry name" value="S73895"/>
</dbReference>
<dbReference type="RefSeq" id="NP_109952.1">
    <property type="nucleotide sequence ID" value="NC_000912.1"/>
</dbReference>
<dbReference type="RefSeq" id="WP_010874621.1">
    <property type="nucleotide sequence ID" value="NZ_OU342337.1"/>
</dbReference>
<dbReference type="SMR" id="P75511"/>
<dbReference type="IntAct" id="P75511">
    <property type="interactions" value="3"/>
</dbReference>
<dbReference type="STRING" id="272634.MPN_264"/>
<dbReference type="EnsemblBacteria" id="AAB96217">
    <property type="protein sequence ID" value="AAB96217"/>
    <property type="gene ID" value="MPN_264"/>
</dbReference>
<dbReference type="KEGG" id="mpn:MPN_264"/>
<dbReference type="PATRIC" id="fig|272634.6.peg.283"/>
<dbReference type="HOGENOM" id="CLU_044146_3_1_14"/>
<dbReference type="OrthoDB" id="9810101at2"/>
<dbReference type="BioCyc" id="MPNE272634:G1GJ3-415-MONOMER"/>
<dbReference type="Proteomes" id="UP000000808">
    <property type="component" value="Chromosome"/>
</dbReference>
<dbReference type="GO" id="GO:0005829">
    <property type="term" value="C:cytosol"/>
    <property type="evidence" value="ECO:0007669"/>
    <property type="project" value="TreeGrafter"/>
</dbReference>
<dbReference type="GO" id="GO:0000287">
    <property type="term" value="F:magnesium ion binding"/>
    <property type="evidence" value="ECO:0007669"/>
    <property type="project" value="TreeGrafter"/>
</dbReference>
<dbReference type="GO" id="GO:0016791">
    <property type="term" value="F:phosphatase activity"/>
    <property type="evidence" value="ECO:0007669"/>
    <property type="project" value="UniProtKB-ARBA"/>
</dbReference>
<dbReference type="Gene3D" id="3.30.1240.10">
    <property type="match status" value="1"/>
</dbReference>
<dbReference type="Gene3D" id="3.40.50.1000">
    <property type="entry name" value="HAD superfamily/HAD-like"/>
    <property type="match status" value="1"/>
</dbReference>
<dbReference type="InterPro" id="IPR000150">
    <property type="entry name" value="Cof"/>
</dbReference>
<dbReference type="InterPro" id="IPR036412">
    <property type="entry name" value="HAD-like_sf"/>
</dbReference>
<dbReference type="InterPro" id="IPR006379">
    <property type="entry name" value="HAD-SF_hydro_IIB"/>
</dbReference>
<dbReference type="InterPro" id="IPR023214">
    <property type="entry name" value="HAD_sf"/>
</dbReference>
<dbReference type="NCBIfam" id="TIGR00099">
    <property type="entry name" value="Cof-subfamily"/>
    <property type="match status" value="1"/>
</dbReference>
<dbReference type="NCBIfam" id="TIGR01484">
    <property type="entry name" value="HAD-SF-IIB"/>
    <property type="match status" value="1"/>
</dbReference>
<dbReference type="PANTHER" id="PTHR10000:SF8">
    <property type="entry name" value="HAD SUPERFAMILY HYDROLASE-LIKE, TYPE 3"/>
    <property type="match status" value="1"/>
</dbReference>
<dbReference type="PANTHER" id="PTHR10000">
    <property type="entry name" value="PHOSPHOSERINE PHOSPHATASE"/>
    <property type="match status" value="1"/>
</dbReference>
<dbReference type="Pfam" id="PF08282">
    <property type="entry name" value="Hydrolase_3"/>
    <property type="match status" value="1"/>
</dbReference>
<dbReference type="SUPFAM" id="SSF56784">
    <property type="entry name" value="HAD-like"/>
    <property type="match status" value="1"/>
</dbReference>
<dbReference type="PROSITE" id="PS01228">
    <property type="entry name" value="COF_1"/>
    <property type="match status" value="1"/>
</dbReference>
<dbReference type="PROSITE" id="PS01229">
    <property type="entry name" value="COF_2"/>
    <property type="match status" value="1"/>
</dbReference>
<comment type="cofactor">
    <cofactor evidence="1">
        <name>Mg(2+)</name>
        <dbReference type="ChEBI" id="CHEBI:18420"/>
    </cofactor>
</comment>
<comment type="similarity">
    <text evidence="2">Belongs to the HAD-like hydrolase superfamily. Cof family.</text>
</comment>
<evidence type="ECO:0000250" key="1"/>
<evidence type="ECO:0000305" key="2"/>
<protein>
    <recommendedName>
        <fullName>Putative phosphatase MPN_264</fullName>
        <ecNumber>3.1.3.-</ecNumber>
    </recommendedName>
</protein>
<gene>
    <name type="ordered locus">MPN_264</name>
    <name type="ORF">A65_orf281</name>
    <name type="ORF">MP569</name>
</gene>
<accession>P75511</accession>
<proteinExistence type="inferred from homology"/>
<keyword id="KW-0378">Hydrolase</keyword>
<keyword id="KW-0460">Magnesium</keyword>
<keyword id="KW-0479">Metal-binding</keyword>
<keyword id="KW-1185">Reference proteome</keyword>
<sequence>MIDLLGLDLDGTLLSRTRQINDPTKQALANLIQKKPSLKVMILTGRSLFSTLKYVQELNELCKKPLVEYFCCYGGAKLYQLNNNQPQEQYKFLIDSRQVKTVFEIVEQHKGLFLAYLDKPKAPYIILGANQFYAWLIKQFWYKQRCEYFKNDHLTDGILKINVYFACPLRLKKVYQIIKRQFQDTLNVVNFSKHLIEITHKDGNKGYAIEAIAKKQGLSLKRMAVIGDSLNDRSMFEKVQYSFAMSKSPDELKLLATEIGTKTNRFRFSSLVDLITEKIIN</sequence>
<organism>
    <name type="scientific">Mycoplasma pneumoniae (strain ATCC 29342 / M129 / Subtype 1)</name>
    <name type="common">Mycoplasmoides pneumoniae</name>
    <dbReference type="NCBI Taxonomy" id="272634"/>
    <lineage>
        <taxon>Bacteria</taxon>
        <taxon>Bacillati</taxon>
        <taxon>Mycoplasmatota</taxon>
        <taxon>Mycoplasmoidales</taxon>
        <taxon>Mycoplasmoidaceae</taxon>
        <taxon>Mycoplasmoides</taxon>
    </lineage>
</organism>
<name>Y264_MYCPN</name>
<reference key="1">
    <citation type="journal article" date="1996" name="Nucleic Acids Res.">
        <title>Complete sequence analysis of the genome of the bacterium Mycoplasma pneumoniae.</title>
        <authorList>
            <person name="Himmelreich R."/>
            <person name="Hilbert H."/>
            <person name="Plagens H."/>
            <person name="Pirkl E."/>
            <person name="Li B.-C."/>
            <person name="Herrmann R."/>
        </authorList>
    </citation>
    <scope>NUCLEOTIDE SEQUENCE [LARGE SCALE GENOMIC DNA]</scope>
    <source>
        <strain>ATCC 29342 / M129 / Subtype 1</strain>
    </source>
</reference>
<feature type="chain" id="PRO_0000054436" description="Putative phosphatase MPN_264">
    <location>
        <begin position="1"/>
        <end position="281"/>
    </location>
</feature>
<feature type="active site" description="Nucleophile" evidence="1">
    <location>
        <position position="8"/>
    </location>
</feature>
<feature type="binding site" evidence="1">
    <location>
        <position position="8"/>
    </location>
    <ligand>
        <name>Mg(2+)</name>
        <dbReference type="ChEBI" id="CHEBI:18420"/>
    </ligand>
</feature>
<feature type="binding site" evidence="1">
    <location>
        <position position="9"/>
    </location>
    <ligand>
        <name>phosphate</name>
        <dbReference type="ChEBI" id="CHEBI:43474"/>
    </ligand>
</feature>
<feature type="binding site" evidence="1">
    <location>
        <position position="10"/>
    </location>
    <ligand>
        <name>Mg(2+)</name>
        <dbReference type="ChEBI" id="CHEBI:18420"/>
    </ligand>
</feature>
<feature type="binding site" evidence="1">
    <location>
        <begin position="44"/>
        <end position="45"/>
    </location>
    <ligand>
        <name>phosphate</name>
        <dbReference type="ChEBI" id="CHEBI:43474"/>
    </ligand>
</feature>
<feature type="binding site" evidence="1">
    <location>
        <position position="205"/>
    </location>
    <ligand>
        <name>phosphate</name>
        <dbReference type="ChEBI" id="CHEBI:43474"/>
    </ligand>
</feature>
<feature type="binding site" evidence="1">
    <location>
        <position position="228"/>
    </location>
    <ligand>
        <name>Mg(2+)</name>
        <dbReference type="ChEBI" id="CHEBI:18420"/>
    </ligand>
</feature>
<feature type="binding site" evidence="1">
    <location>
        <position position="229"/>
    </location>
    <ligand>
        <name>Mg(2+)</name>
        <dbReference type="ChEBI" id="CHEBI:18420"/>
    </ligand>
</feature>
<feature type="binding site" evidence="1">
    <location>
        <position position="231"/>
    </location>
    <ligand>
        <name>phosphate</name>
        <dbReference type="ChEBI" id="CHEBI:43474"/>
    </ligand>
</feature>